<organism>
    <name type="scientific">Oryza sativa subsp. japonica</name>
    <name type="common">Rice</name>
    <dbReference type="NCBI Taxonomy" id="39947"/>
    <lineage>
        <taxon>Eukaryota</taxon>
        <taxon>Viridiplantae</taxon>
        <taxon>Streptophyta</taxon>
        <taxon>Embryophyta</taxon>
        <taxon>Tracheophyta</taxon>
        <taxon>Spermatophyta</taxon>
        <taxon>Magnoliopsida</taxon>
        <taxon>Liliopsida</taxon>
        <taxon>Poales</taxon>
        <taxon>Poaceae</taxon>
        <taxon>BOP clade</taxon>
        <taxon>Oryzoideae</taxon>
        <taxon>Oryzeae</taxon>
        <taxon>Oryzinae</taxon>
        <taxon>Oryza</taxon>
        <taxon>Oryza sativa</taxon>
    </lineage>
</organism>
<name>C3H15_ORYSJ</name>
<evidence type="ECO:0000255" key="1">
    <source>
        <dbReference type="PROSITE-ProRule" id="PRU00175"/>
    </source>
</evidence>
<evidence type="ECO:0000255" key="2">
    <source>
        <dbReference type="PROSITE-ProRule" id="PRU00723"/>
    </source>
</evidence>
<evidence type="ECO:0000256" key="3">
    <source>
        <dbReference type="SAM" id="MobiDB-lite"/>
    </source>
</evidence>
<evidence type="ECO:0000305" key="4"/>
<reference key="1">
    <citation type="journal article" date="2005" name="Nature">
        <title>The map-based sequence of the rice genome.</title>
        <authorList>
            <consortium name="International rice genome sequencing project (IRGSP)"/>
        </authorList>
    </citation>
    <scope>NUCLEOTIDE SEQUENCE [LARGE SCALE GENOMIC DNA]</scope>
    <source>
        <strain>cv. Nipponbare</strain>
    </source>
</reference>
<reference key="2">
    <citation type="journal article" date="2008" name="Nucleic Acids Res.">
        <title>The rice annotation project database (RAP-DB): 2008 update.</title>
        <authorList>
            <consortium name="The rice annotation project (RAP)"/>
        </authorList>
    </citation>
    <scope>GENOME REANNOTATION</scope>
    <source>
        <strain>cv. Nipponbare</strain>
    </source>
</reference>
<reference key="3">
    <citation type="journal article" date="2013" name="Rice">
        <title>Improvement of the Oryza sativa Nipponbare reference genome using next generation sequence and optical map data.</title>
        <authorList>
            <person name="Kawahara Y."/>
            <person name="de la Bastide M."/>
            <person name="Hamilton J.P."/>
            <person name="Kanamori H."/>
            <person name="McCombie W.R."/>
            <person name="Ouyang S."/>
            <person name="Schwartz D.C."/>
            <person name="Tanaka T."/>
            <person name="Wu J."/>
            <person name="Zhou S."/>
            <person name="Childs K.L."/>
            <person name="Davidson R.M."/>
            <person name="Lin H."/>
            <person name="Quesada-Ocampo L."/>
            <person name="Vaillancourt B."/>
            <person name="Sakai H."/>
            <person name="Lee S.S."/>
            <person name="Kim J."/>
            <person name="Numa H."/>
            <person name="Itoh T."/>
            <person name="Buell C.R."/>
            <person name="Matsumoto T."/>
        </authorList>
    </citation>
    <scope>GENOME REANNOTATION</scope>
    <source>
        <strain>cv. Nipponbare</strain>
    </source>
</reference>
<reference key="4">
    <citation type="journal article" date="2003" name="Science">
        <title>Collection, mapping, and annotation of over 28,000 cDNA clones from japonica rice.</title>
        <authorList>
            <consortium name="The rice full-length cDNA consortium"/>
        </authorList>
    </citation>
    <scope>NUCLEOTIDE SEQUENCE [LARGE SCALE MRNA]</scope>
    <source>
        <strain>cv. Nipponbare</strain>
    </source>
</reference>
<reference key="5">
    <citation type="journal article" date="2008" name="BMC Genomics">
        <title>Genome-wide analysis of CCCH zinc finger family in Arabidopsis and rice.</title>
        <authorList>
            <person name="Wang D."/>
            <person name="Guo Y."/>
            <person name="Wu C."/>
            <person name="Yang G."/>
            <person name="Li Y."/>
            <person name="Zheng C."/>
        </authorList>
    </citation>
    <scope>NOMENCLATURE</scope>
</reference>
<dbReference type="EMBL" id="AP005532">
    <property type="protein sequence ID" value="BAD23334.1"/>
    <property type="molecule type" value="Genomic_DNA"/>
</dbReference>
<dbReference type="EMBL" id="AP008208">
    <property type="protein sequence ID" value="BAF08534.1"/>
    <property type="molecule type" value="Genomic_DNA"/>
</dbReference>
<dbReference type="EMBL" id="AP014958">
    <property type="protein sequence ID" value="BAS78250.1"/>
    <property type="molecule type" value="Genomic_DNA"/>
</dbReference>
<dbReference type="EMBL" id="AK106298">
    <property type="status" value="NOT_ANNOTATED_CDS"/>
    <property type="molecule type" value="mRNA"/>
</dbReference>
<dbReference type="RefSeq" id="XP_015622931.1">
    <property type="nucleotide sequence ID" value="XM_015767445.1"/>
</dbReference>
<dbReference type="SMR" id="Q6K4V3"/>
<dbReference type="FunCoup" id="Q6K4V3">
    <property type="interactions" value="505"/>
</dbReference>
<dbReference type="STRING" id="39947.Q6K4V3"/>
<dbReference type="PaxDb" id="39947-Q6K4V3"/>
<dbReference type="EnsemblPlants" id="Os02t0301000-01">
    <property type="protein sequence ID" value="Os02t0301000-01"/>
    <property type="gene ID" value="Os02g0301000"/>
</dbReference>
<dbReference type="Gramene" id="Os02t0301000-01">
    <property type="protein sequence ID" value="Os02t0301000-01"/>
    <property type="gene ID" value="Os02g0301000"/>
</dbReference>
<dbReference type="KEGG" id="dosa:Os02g0301000"/>
<dbReference type="eggNOG" id="KOG1813">
    <property type="taxonomic scope" value="Eukaryota"/>
</dbReference>
<dbReference type="HOGENOM" id="CLU_050460_1_2_1"/>
<dbReference type="InParanoid" id="Q6K4V3"/>
<dbReference type="OMA" id="WQLEADH"/>
<dbReference type="OrthoDB" id="25761at2759"/>
<dbReference type="Proteomes" id="UP000000763">
    <property type="component" value="Chromosome 2"/>
</dbReference>
<dbReference type="Proteomes" id="UP000059680">
    <property type="component" value="Chromosome 2"/>
</dbReference>
<dbReference type="ExpressionAtlas" id="Q6K4V3">
    <property type="expression patterns" value="baseline and differential"/>
</dbReference>
<dbReference type="GO" id="GO:0005684">
    <property type="term" value="C:U2-type spliceosomal complex"/>
    <property type="evidence" value="ECO:0000318"/>
    <property type="project" value="GO_Central"/>
</dbReference>
<dbReference type="GO" id="GO:0003677">
    <property type="term" value="F:DNA binding"/>
    <property type="evidence" value="ECO:0007669"/>
    <property type="project" value="UniProtKB-KW"/>
</dbReference>
<dbReference type="GO" id="GO:0008270">
    <property type="term" value="F:zinc ion binding"/>
    <property type="evidence" value="ECO:0007669"/>
    <property type="project" value="UniProtKB-KW"/>
</dbReference>
<dbReference type="GO" id="GO:0034247">
    <property type="term" value="P:snoRNA splicing"/>
    <property type="evidence" value="ECO:0000318"/>
    <property type="project" value="GO_Central"/>
</dbReference>
<dbReference type="CDD" id="cd16539">
    <property type="entry name" value="RING-HC_RNF113A_B"/>
    <property type="match status" value="1"/>
</dbReference>
<dbReference type="FunFam" id="3.30.40.10:FF:000045">
    <property type="entry name" value="RING finger protein 113A"/>
    <property type="match status" value="1"/>
</dbReference>
<dbReference type="FunFam" id="4.10.1000.10:FF:000014">
    <property type="entry name" value="Zinc finger CCCH domain-containing protein 1"/>
    <property type="match status" value="1"/>
</dbReference>
<dbReference type="Gene3D" id="4.10.1000.10">
    <property type="entry name" value="Zinc finger, CCCH-type"/>
    <property type="match status" value="1"/>
</dbReference>
<dbReference type="Gene3D" id="3.30.40.10">
    <property type="entry name" value="Zinc/RING finger domain, C3HC4 (zinc finger)"/>
    <property type="match status" value="1"/>
</dbReference>
<dbReference type="InterPro" id="IPR039971">
    <property type="entry name" value="CWC24-like"/>
</dbReference>
<dbReference type="InterPro" id="IPR000571">
    <property type="entry name" value="Znf_CCCH"/>
</dbReference>
<dbReference type="InterPro" id="IPR036855">
    <property type="entry name" value="Znf_CCCH_sf"/>
</dbReference>
<dbReference type="InterPro" id="IPR001841">
    <property type="entry name" value="Znf_RING"/>
</dbReference>
<dbReference type="InterPro" id="IPR013083">
    <property type="entry name" value="Znf_RING/FYVE/PHD"/>
</dbReference>
<dbReference type="InterPro" id="IPR017907">
    <property type="entry name" value="Znf_RING_CS"/>
</dbReference>
<dbReference type="PANTHER" id="PTHR12930:SF0">
    <property type="entry name" value="RING FINGER PROTEIN 113B"/>
    <property type="match status" value="1"/>
</dbReference>
<dbReference type="PANTHER" id="PTHR12930">
    <property type="entry name" value="ZINC FINGER PROTEIN 183"/>
    <property type="match status" value="1"/>
</dbReference>
<dbReference type="Pfam" id="PF13920">
    <property type="entry name" value="zf-C3HC4_3"/>
    <property type="match status" value="1"/>
</dbReference>
<dbReference type="Pfam" id="PF00642">
    <property type="entry name" value="zf-CCCH"/>
    <property type="match status" value="1"/>
</dbReference>
<dbReference type="SMART" id="SM00184">
    <property type="entry name" value="RING"/>
    <property type="match status" value="1"/>
</dbReference>
<dbReference type="SMART" id="SM00356">
    <property type="entry name" value="ZnF_C3H1"/>
    <property type="match status" value="1"/>
</dbReference>
<dbReference type="SUPFAM" id="SSF90229">
    <property type="entry name" value="CCCH zinc finger"/>
    <property type="match status" value="1"/>
</dbReference>
<dbReference type="SUPFAM" id="SSF57850">
    <property type="entry name" value="RING/U-box"/>
    <property type="match status" value="1"/>
</dbReference>
<dbReference type="PROSITE" id="PS50103">
    <property type="entry name" value="ZF_C3H1"/>
    <property type="match status" value="1"/>
</dbReference>
<dbReference type="PROSITE" id="PS00518">
    <property type="entry name" value="ZF_RING_1"/>
    <property type="match status" value="1"/>
</dbReference>
<dbReference type="PROSITE" id="PS50089">
    <property type="entry name" value="ZF_RING_2"/>
    <property type="match status" value="1"/>
</dbReference>
<gene>
    <name type="ordered locus">Os02g0301000</name>
    <name type="ordered locus">LOC_Os02g19804</name>
    <name type="ORF">OSJNBa0010K08.8-1</name>
</gene>
<protein>
    <recommendedName>
        <fullName>Zinc finger CCCH domain-containing protein 15</fullName>
        <shortName>OsC3H15</shortName>
    </recommendedName>
</protein>
<feature type="chain" id="PRO_0000346811" description="Zinc finger CCCH domain-containing protein 15">
    <location>
        <begin position="1"/>
        <end position="326"/>
    </location>
</feature>
<feature type="zinc finger region" description="C3H1-type" evidence="2">
    <location>
        <begin position="187"/>
        <end position="215"/>
    </location>
</feature>
<feature type="zinc finger region" description="RING-type" evidence="1">
    <location>
        <begin position="265"/>
        <end position="303"/>
    </location>
</feature>
<feature type="region of interest" description="Disordered" evidence="3">
    <location>
        <begin position="1"/>
        <end position="142"/>
    </location>
</feature>
<feature type="compositionally biased region" description="Gly residues" evidence="3">
    <location>
        <begin position="1"/>
        <end position="14"/>
    </location>
</feature>
<feature type="compositionally biased region" description="Basic residues" evidence="3">
    <location>
        <begin position="24"/>
        <end position="33"/>
    </location>
</feature>
<feature type="compositionally biased region" description="Low complexity" evidence="3">
    <location>
        <begin position="47"/>
        <end position="64"/>
    </location>
</feature>
<feature type="compositionally biased region" description="Polar residues" evidence="3">
    <location>
        <begin position="81"/>
        <end position="100"/>
    </location>
</feature>
<feature type="compositionally biased region" description="Basic and acidic residues" evidence="3">
    <location>
        <begin position="104"/>
        <end position="125"/>
    </location>
</feature>
<feature type="sequence conflict" description="In Ref. 4; AK106298." evidence="4" ref="4">
    <location>
        <position position="43"/>
    </location>
</feature>
<sequence length="326" mass="35778">MADGGGGGEAGSGGSAPVCSFVRKPPKNIRKRPTAPAGSDDDDEDGSGAIAAARAKKAPSSTSKLFFSSADGSSEPRRFQYESSRTIQASTDSRATATLETETEFDRDARAIRERQLKQAEESLKKNPSAPASSSGSGSGEVYKGIHGYTDYKAGFRREHTVSSEKAGGSHGPLRASAHIRLSARFDYQPDICKDYKETGYCGYGDSCKFMHDRGDYKSGWQIEKEWEEAEKARKRRIAMGGDGSDYEAGEEDDDDDEEALPFACYICREPFVDPVVTKCKHYFCEHCALKHHSKNKKCFVCNKPTLGIFNAAQEIRKKMAQDKKQ</sequence>
<keyword id="KW-0238">DNA-binding</keyword>
<keyword id="KW-0479">Metal-binding</keyword>
<keyword id="KW-1185">Reference proteome</keyword>
<keyword id="KW-0862">Zinc</keyword>
<keyword id="KW-0863">Zinc-finger</keyword>
<proteinExistence type="evidence at transcript level"/>
<accession>Q6K4V3</accession>
<accession>A0A0P0VHY7</accession>
<comment type="sequence caution" evidence="4">
    <conflict type="erroneous termination">
        <sequence resource="EMBL" id="AK106298"/>
    </conflict>
    <text>Truncated C-terminus.</text>
</comment>